<keyword id="KW-0106">Calcium</keyword>
<keyword id="KW-0119">Carbohydrate metabolism</keyword>
<keyword id="KW-0961">Cell wall biogenesis/degradation</keyword>
<keyword id="KW-0325">Glycoprotein</keyword>
<keyword id="KW-0456">Lyase</keyword>
<keyword id="KW-0479">Metal-binding</keyword>
<keyword id="KW-0624">Polysaccharide degradation</keyword>
<keyword id="KW-1185">Reference proteome</keyword>
<keyword id="KW-0964">Secreted</keyword>
<keyword id="KW-0732">Signal</keyword>
<evidence type="ECO:0000250" key="1"/>
<evidence type="ECO:0000255" key="2"/>
<evidence type="ECO:0000269" key="3">
    <source>
    </source>
</evidence>
<evidence type="ECO:0000305" key="4"/>
<organism>
    <name type="scientific">Emericella nidulans (strain FGSC A4 / ATCC 38163 / CBS 112.46 / NRRL 194 / M139)</name>
    <name type="common">Aspergillus nidulans</name>
    <dbReference type="NCBI Taxonomy" id="227321"/>
    <lineage>
        <taxon>Eukaryota</taxon>
        <taxon>Fungi</taxon>
        <taxon>Dikarya</taxon>
        <taxon>Ascomycota</taxon>
        <taxon>Pezizomycotina</taxon>
        <taxon>Eurotiomycetes</taxon>
        <taxon>Eurotiomycetidae</taxon>
        <taxon>Eurotiales</taxon>
        <taxon>Aspergillaceae</taxon>
        <taxon>Aspergillus</taxon>
        <taxon>Aspergillus subgen. Nidulantes</taxon>
    </lineage>
</organism>
<comment type="function">
    <text evidence="3">Pectinolytic enzyme consist of four classes of enzymes: pectin lyase, polygalacturonase, pectin methylesterase and rhamnogalacturonase. Among pectinolytic enzymes, pectin lyase is the most important in depolymerization of pectin, since it cleaves internal glycosidic bonds of highly methylated pectins. Favors pectate, the anion, over pectin, the methyl ester.</text>
</comment>
<comment type="catalytic activity">
    <reaction>
        <text>Eliminative cleavage of (1-&gt;4)-alpha-D-galacturonan to give oligosaccharides with 4-deoxy-alpha-D-galact-4-enuronosyl groups at their non-reducing ends.</text>
        <dbReference type="EC" id="4.2.2.2"/>
    </reaction>
</comment>
<comment type="cofactor">
    <cofactor evidence="1">
        <name>Ca(2+)</name>
        <dbReference type="ChEBI" id="CHEBI:29108"/>
    </cofactor>
    <text evidence="1">Binds 1 Ca(2+) ion per subunit.</text>
</comment>
<comment type="biophysicochemical properties">
    <phDependence>
        <text evidence="3">Optimum pH is 8.5.</text>
    </phDependence>
    <temperatureDependence>
        <text evidence="3">Optimum temperature is 22 degrees Celsius.</text>
    </temperatureDependence>
</comment>
<comment type="subcellular location">
    <subcellularLocation>
        <location evidence="4">Secreted</location>
    </subcellularLocation>
</comment>
<comment type="similarity">
    <text evidence="4">Belongs to the polysaccharide lyase 1 family.</text>
</comment>
<gene>
    <name type="primary">plyA</name>
    <name type="ORF">AN7646</name>
</gene>
<reference key="1">
    <citation type="journal article" date="2006" name="Proc. Natl. Acad. Sci. U.S.A.">
        <title>Development and application of a suite of polysaccharide-degrading enzymes for analyzing plant cell walls.</title>
        <authorList>
            <person name="Bauer S."/>
            <person name="Vasu P."/>
            <person name="Persson S."/>
            <person name="Mort A.J."/>
            <person name="Somerville C.R."/>
        </authorList>
    </citation>
    <scope>NUCLEOTIDE SEQUENCE [MRNA]</scope>
    <scope>FUNCTION</scope>
    <scope>BIOPHYSICOCHEMICAL PROPERTIES</scope>
    <source>
        <strain>FGSC A4 / ATCC 38163 / CBS 112.46 / NRRL 194 / M139</strain>
    </source>
</reference>
<reference key="2">
    <citation type="journal article" date="2005" name="Nature">
        <title>Sequencing of Aspergillus nidulans and comparative analysis with A. fumigatus and A. oryzae.</title>
        <authorList>
            <person name="Galagan J.E."/>
            <person name="Calvo S.E."/>
            <person name="Cuomo C."/>
            <person name="Ma L.-J."/>
            <person name="Wortman J.R."/>
            <person name="Batzoglou S."/>
            <person name="Lee S.-I."/>
            <person name="Bastuerkmen M."/>
            <person name="Spevak C.C."/>
            <person name="Clutterbuck J."/>
            <person name="Kapitonov V."/>
            <person name="Jurka J."/>
            <person name="Scazzocchio C."/>
            <person name="Farman M.L."/>
            <person name="Butler J."/>
            <person name="Purcell S."/>
            <person name="Harris S."/>
            <person name="Braus G.H."/>
            <person name="Draht O."/>
            <person name="Busch S."/>
            <person name="D'Enfert C."/>
            <person name="Bouchier C."/>
            <person name="Goldman G.H."/>
            <person name="Bell-Pedersen D."/>
            <person name="Griffiths-Jones S."/>
            <person name="Doonan J.H."/>
            <person name="Yu J."/>
            <person name="Vienken K."/>
            <person name="Pain A."/>
            <person name="Freitag M."/>
            <person name="Selker E.U."/>
            <person name="Archer D.B."/>
            <person name="Penalva M.A."/>
            <person name="Oakley B.R."/>
            <person name="Momany M."/>
            <person name="Tanaka T."/>
            <person name="Kumagai T."/>
            <person name="Asai K."/>
            <person name="Machida M."/>
            <person name="Nierman W.C."/>
            <person name="Denning D.W."/>
            <person name="Caddick M.X."/>
            <person name="Hynes M."/>
            <person name="Paoletti M."/>
            <person name="Fischer R."/>
            <person name="Miller B.L."/>
            <person name="Dyer P.S."/>
            <person name="Sachs M.S."/>
            <person name="Osmani S.A."/>
            <person name="Birren B.W."/>
        </authorList>
    </citation>
    <scope>NUCLEOTIDE SEQUENCE [LARGE SCALE GENOMIC DNA]</scope>
    <source>
        <strain>FGSC A4 / ATCC 38163 / CBS 112.46 / NRRL 194 / M139</strain>
    </source>
</reference>
<reference key="3">
    <citation type="journal article" date="2009" name="Fungal Genet. Biol.">
        <title>The 2008 update of the Aspergillus nidulans genome annotation: a community effort.</title>
        <authorList>
            <person name="Wortman J.R."/>
            <person name="Gilsenan J.M."/>
            <person name="Joardar V."/>
            <person name="Deegan J."/>
            <person name="Clutterbuck J."/>
            <person name="Andersen M.R."/>
            <person name="Archer D."/>
            <person name="Bencina M."/>
            <person name="Braus G."/>
            <person name="Coutinho P."/>
            <person name="von Dohren H."/>
            <person name="Doonan J."/>
            <person name="Driessen A.J."/>
            <person name="Durek P."/>
            <person name="Espeso E."/>
            <person name="Fekete E."/>
            <person name="Flipphi M."/>
            <person name="Estrada C.G."/>
            <person name="Geysens S."/>
            <person name="Goldman G."/>
            <person name="de Groot P.W."/>
            <person name="Hansen K."/>
            <person name="Harris S.D."/>
            <person name="Heinekamp T."/>
            <person name="Helmstaedt K."/>
            <person name="Henrissat B."/>
            <person name="Hofmann G."/>
            <person name="Homan T."/>
            <person name="Horio T."/>
            <person name="Horiuchi H."/>
            <person name="James S."/>
            <person name="Jones M."/>
            <person name="Karaffa L."/>
            <person name="Karanyi Z."/>
            <person name="Kato M."/>
            <person name="Keller N."/>
            <person name="Kelly D.E."/>
            <person name="Kiel J.A."/>
            <person name="Kim J.M."/>
            <person name="van der Klei I.J."/>
            <person name="Klis F.M."/>
            <person name="Kovalchuk A."/>
            <person name="Krasevec N."/>
            <person name="Kubicek C.P."/>
            <person name="Liu B."/>
            <person name="Maccabe A."/>
            <person name="Meyer V."/>
            <person name="Mirabito P."/>
            <person name="Miskei M."/>
            <person name="Mos M."/>
            <person name="Mullins J."/>
            <person name="Nelson D.R."/>
            <person name="Nielsen J."/>
            <person name="Oakley B.R."/>
            <person name="Osmani S.A."/>
            <person name="Pakula T."/>
            <person name="Paszewski A."/>
            <person name="Paulsen I."/>
            <person name="Pilsyk S."/>
            <person name="Pocsi I."/>
            <person name="Punt P.J."/>
            <person name="Ram A.F."/>
            <person name="Ren Q."/>
            <person name="Robellet X."/>
            <person name="Robson G."/>
            <person name="Seiboth B."/>
            <person name="van Solingen P."/>
            <person name="Specht T."/>
            <person name="Sun J."/>
            <person name="Taheri-Talesh N."/>
            <person name="Takeshita N."/>
            <person name="Ussery D."/>
            <person name="vanKuyk P.A."/>
            <person name="Visser H."/>
            <person name="van de Vondervoort P.J."/>
            <person name="de Vries R.P."/>
            <person name="Walton J."/>
            <person name="Xiang X."/>
            <person name="Xiong Y."/>
            <person name="Zeng A.P."/>
            <person name="Brandt B.W."/>
            <person name="Cornell M.J."/>
            <person name="van den Hondel C.A."/>
            <person name="Visser J."/>
            <person name="Oliver S.G."/>
            <person name="Turner G."/>
        </authorList>
    </citation>
    <scope>GENOME REANNOTATION</scope>
    <source>
        <strain>FGSC A4 / ATCC 38163 / CBS 112.46 / NRRL 194 / M139</strain>
    </source>
</reference>
<protein>
    <recommendedName>
        <fullName>Pectate lyase A</fullName>
        <ecNumber>4.2.2.2</ecNumber>
    </recommendedName>
</protein>
<sequence length="327" mass="35127">MQNLKFLIAAVSCLGPALAAPTPTSNFINSNFNKRASVEDSAFGYASLNGGTTGGAGGTTTTVSSYAEFTAAVQGDDPKIVIVSGPIEETAEQVDVGSNTSILGADSSAVLTGFGLRLKEVENVIIRNLGIAKVLADNGDAIGAEYSNNIWIDHVDVSSDRDHDKDYYDGLLDFKRGSDYITVSNSFIHDHWKASLVGHSNSNEDEDSGKLHVTYANNYWYNLNSRAPSIRFGTGHIYNNYYETVSDGINTRIGAQVLVEGNVFVDSKKALYSTDEGYAVERNNDFGDAKNEALEGTLTSVEYEYDLLDTSEVKSAVVGTAGQTLTF</sequence>
<dbReference type="EC" id="4.2.2.2"/>
<dbReference type="EMBL" id="DQ490513">
    <property type="protein sequence ID" value="ABF50889.1"/>
    <property type="molecule type" value="mRNA"/>
</dbReference>
<dbReference type="EMBL" id="AACD01000130">
    <property type="protein sequence ID" value="EAA61832.1"/>
    <property type="molecule type" value="Genomic_DNA"/>
</dbReference>
<dbReference type="EMBL" id="BN001304">
    <property type="protein sequence ID" value="CBF79809.1"/>
    <property type="molecule type" value="Genomic_DNA"/>
</dbReference>
<dbReference type="RefSeq" id="XP_680915.1">
    <property type="nucleotide sequence ID" value="XM_675823.1"/>
</dbReference>
<dbReference type="SMR" id="Q5AVN4"/>
<dbReference type="STRING" id="227321.Q5AVN4"/>
<dbReference type="CAZy" id="PL1">
    <property type="family name" value="Polysaccharide Lyase Family 1"/>
</dbReference>
<dbReference type="GlyCosmos" id="Q5AVN4">
    <property type="glycosylation" value="1 site, No reported glycans"/>
</dbReference>
<dbReference type="EnsemblFungi" id="CBF79809">
    <property type="protein sequence ID" value="CBF79809"/>
    <property type="gene ID" value="ANIA_07646"/>
</dbReference>
<dbReference type="KEGG" id="ani:ANIA_07646"/>
<dbReference type="VEuPathDB" id="FungiDB:AN7646"/>
<dbReference type="eggNOG" id="ENOG502S66G">
    <property type="taxonomic scope" value="Eukaryota"/>
</dbReference>
<dbReference type="HOGENOM" id="CLU_021894_2_1_1"/>
<dbReference type="InParanoid" id="Q5AVN4"/>
<dbReference type="OMA" id="NYWIDHV"/>
<dbReference type="OrthoDB" id="1637350at2759"/>
<dbReference type="Proteomes" id="UP000000560">
    <property type="component" value="Chromosome IV"/>
</dbReference>
<dbReference type="GO" id="GO:0005576">
    <property type="term" value="C:extracellular region"/>
    <property type="evidence" value="ECO:0000250"/>
    <property type="project" value="UniProtKB"/>
</dbReference>
<dbReference type="GO" id="GO:0046872">
    <property type="term" value="F:metal ion binding"/>
    <property type="evidence" value="ECO:0007669"/>
    <property type="project" value="UniProtKB-KW"/>
</dbReference>
<dbReference type="GO" id="GO:0030570">
    <property type="term" value="F:pectate lyase activity"/>
    <property type="evidence" value="ECO:0000314"/>
    <property type="project" value="UniProtKB"/>
</dbReference>
<dbReference type="GO" id="GO:0071555">
    <property type="term" value="P:cell wall organization"/>
    <property type="evidence" value="ECO:0007669"/>
    <property type="project" value="UniProtKB-KW"/>
</dbReference>
<dbReference type="GO" id="GO:0045490">
    <property type="term" value="P:pectin catabolic process"/>
    <property type="evidence" value="ECO:0000314"/>
    <property type="project" value="UniProtKB"/>
</dbReference>
<dbReference type="FunFam" id="2.160.20.10:FF:000036">
    <property type="entry name" value="Pectate lyase A"/>
    <property type="match status" value="1"/>
</dbReference>
<dbReference type="Gene3D" id="2.160.20.10">
    <property type="entry name" value="Single-stranded right-handed beta-helix, Pectin lyase-like"/>
    <property type="match status" value="1"/>
</dbReference>
<dbReference type="InterPro" id="IPR002022">
    <property type="entry name" value="Pec_lyase"/>
</dbReference>
<dbReference type="InterPro" id="IPR012334">
    <property type="entry name" value="Pectin_lyas_fold"/>
</dbReference>
<dbReference type="InterPro" id="IPR011050">
    <property type="entry name" value="Pectin_lyase_fold/virulence"/>
</dbReference>
<dbReference type="InterPro" id="IPR045032">
    <property type="entry name" value="PEL"/>
</dbReference>
<dbReference type="PANTHER" id="PTHR31683">
    <property type="entry name" value="PECTATE LYASE 18-RELATED"/>
    <property type="match status" value="1"/>
</dbReference>
<dbReference type="PANTHER" id="PTHR31683:SF18">
    <property type="entry name" value="PECTATE LYASE 21-RELATED"/>
    <property type="match status" value="1"/>
</dbReference>
<dbReference type="Pfam" id="PF00544">
    <property type="entry name" value="Pectate_lyase_4"/>
    <property type="match status" value="1"/>
</dbReference>
<dbReference type="SMART" id="SM00656">
    <property type="entry name" value="Amb_all"/>
    <property type="match status" value="1"/>
</dbReference>
<dbReference type="SUPFAM" id="SSF51126">
    <property type="entry name" value="Pectin lyase-like"/>
    <property type="match status" value="1"/>
</dbReference>
<name>PLYA_EMENI</name>
<feature type="signal peptide" evidence="2">
    <location>
        <begin position="1"/>
        <end position="19"/>
    </location>
</feature>
<feature type="chain" id="PRO_0000394563" description="Pectate lyase A">
    <location>
        <begin position="20"/>
        <end position="327"/>
    </location>
</feature>
<feature type="active site" evidence="2">
    <location>
        <position position="226"/>
    </location>
</feature>
<feature type="binding site" evidence="1">
    <location>
        <position position="140"/>
    </location>
    <ligand>
        <name>Ca(2+)</name>
        <dbReference type="ChEBI" id="CHEBI:29108"/>
    </ligand>
</feature>
<feature type="binding site" evidence="1">
    <location>
        <position position="169"/>
    </location>
    <ligand>
        <name>Ca(2+)</name>
        <dbReference type="ChEBI" id="CHEBI:29108"/>
    </ligand>
</feature>
<feature type="binding site" evidence="1">
    <location>
        <position position="173"/>
    </location>
    <ligand>
        <name>Ca(2+)</name>
        <dbReference type="ChEBI" id="CHEBI:29108"/>
    </ligand>
</feature>
<feature type="glycosylation site" description="N-linked (GlcNAc...) asparagine" evidence="2">
    <location>
        <position position="99"/>
    </location>
</feature>
<proteinExistence type="evidence at protein level"/>
<accession>Q5AVN4</accession>
<accession>C8VBZ5</accession>
<accession>Q1HFR1</accession>